<sequence>MKILHICSEMYPLIKTGGLADVMGALPYAQQQSGNDVRVLIPLYPQVAEKIGETNEVATIGTFAGLVTIRFTYFNGLGVYVIDAPHLFQRSGNPYHDSGYADYPDNYKRFALLGYLGAQLSEGLDQWWGKADILHAHDWQGGLACAYLKSWNSPVKSVFTIHNIAYPGRFHSYHLHELGLPWHFFQAEGLEFYGEISYLKAGLYFADKITTVSPTYALEITEEIAGGGMHGLLQTRKAQGRLHGVLNGVDDTVWNPETDTNIVATYKPSYMQGKSKNKAELQQMFHLPEDKDAMLMVMVTRLTEQKGADFILDRIDELMEERVQLVVLGSGSPHLEYLLNEARSRHPEQIGIYIGYNEALSHQIIAGGDVILVPSRFEPCGLTQLYGLKYGTLPLVRRTGGLADTVVDSNKESIEQRTATGFVFNYPSSDDFLEAFRRAVNLWKKNKLWSSVRQNALAQDFGWARAAASYQAIYQEIV</sequence>
<organism>
    <name type="scientific">Actinobacillus pleuropneumoniae serotype 5b (strain L20)</name>
    <dbReference type="NCBI Taxonomy" id="416269"/>
    <lineage>
        <taxon>Bacteria</taxon>
        <taxon>Pseudomonadati</taxon>
        <taxon>Pseudomonadota</taxon>
        <taxon>Gammaproteobacteria</taxon>
        <taxon>Pasteurellales</taxon>
        <taxon>Pasteurellaceae</taxon>
        <taxon>Actinobacillus</taxon>
    </lineage>
</organism>
<feature type="chain" id="PRO_1000014339" description="Glycogen synthase">
    <location>
        <begin position="1"/>
        <end position="478"/>
    </location>
</feature>
<feature type="binding site" evidence="1">
    <location>
        <position position="15"/>
    </location>
    <ligand>
        <name>ADP-alpha-D-glucose</name>
        <dbReference type="ChEBI" id="CHEBI:57498"/>
    </ligand>
</feature>
<accession>A3MZ67</accession>
<comment type="function">
    <text evidence="1">Synthesizes alpha-1,4-glucan chains using ADP-glucose.</text>
</comment>
<comment type="catalytic activity">
    <reaction evidence="1">
        <text>[(1-&gt;4)-alpha-D-glucosyl](n) + ADP-alpha-D-glucose = [(1-&gt;4)-alpha-D-glucosyl](n+1) + ADP + H(+)</text>
        <dbReference type="Rhea" id="RHEA:18189"/>
        <dbReference type="Rhea" id="RHEA-COMP:9584"/>
        <dbReference type="Rhea" id="RHEA-COMP:9587"/>
        <dbReference type="ChEBI" id="CHEBI:15378"/>
        <dbReference type="ChEBI" id="CHEBI:15444"/>
        <dbReference type="ChEBI" id="CHEBI:57498"/>
        <dbReference type="ChEBI" id="CHEBI:456216"/>
        <dbReference type="EC" id="2.4.1.21"/>
    </reaction>
</comment>
<comment type="pathway">
    <text evidence="1">Glycan biosynthesis; glycogen biosynthesis.</text>
</comment>
<comment type="similarity">
    <text evidence="1">Belongs to the glycosyltransferase 1 family. Bacterial/plant glycogen synthase subfamily.</text>
</comment>
<reference key="1">
    <citation type="journal article" date="2008" name="J. Bacteriol.">
        <title>The complete genome sequence of Actinobacillus pleuropneumoniae L20 (serotype 5b).</title>
        <authorList>
            <person name="Foote S.J."/>
            <person name="Bosse J.T."/>
            <person name="Bouevitch A.B."/>
            <person name="Langford P.R."/>
            <person name="Young N.M."/>
            <person name="Nash J.H.E."/>
        </authorList>
    </citation>
    <scope>NUCLEOTIDE SEQUENCE [LARGE SCALE GENOMIC DNA]</scope>
    <source>
        <strain>L20</strain>
    </source>
</reference>
<evidence type="ECO:0000255" key="1">
    <source>
        <dbReference type="HAMAP-Rule" id="MF_00484"/>
    </source>
</evidence>
<protein>
    <recommendedName>
        <fullName evidence="1">Glycogen synthase</fullName>
        <ecNumber evidence="1">2.4.1.21</ecNumber>
    </recommendedName>
    <alternativeName>
        <fullName evidence="1">Starch [bacterial glycogen] synthase</fullName>
    </alternativeName>
</protein>
<proteinExistence type="inferred from homology"/>
<dbReference type="EC" id="2.4.1.21" evidence="1"/>
<dbReference type="EMBL" id="CP000569">
    <property type="protein sequence ID" value="ABN73453.1"/>
    <property type="molecule type" value="Genomic_DNA"/>
</dbReference>
<dbReference type="RefSeq" id="WP_005596321.1">
    <property type="nucleotide sequence ID" value="NC_009053.1"/>
</dbReference>
<dbReference type="SMR" id="A3MZ67"/>
<dbReference type="STRING" id="416269.APL_0349"/>
<dbReference type="CAZy" id="GT5">
    <property type="family name" value="Glycosyltransferase Family 5"/>
</dbReference>
<dbReference type="EnsemblBacteria" id="ABN73453">
    <property type="protein sequence ID" value="ABN73453"/>
    <property type="gene ID" value="APL_0349"/>
</dbReference>
<dbReference type="GeneID" id="48598513"/>
<dbReference type="KEGG" id="apl:APL_0349"/>
<dbReference type="eggNOG" id="COG0297">
    <property type="taxonomic scope" value="Bacteria"/>
</dbReference>
<dbReference type="HOGENOM" id="CLU_009583_18_4_6"/>
<dbReference type="UniPathway" id="UPA00164"/>
<dbReference type="Proteomes" id="UP000001432">
    <property type="component" value="Chromosome"/>
</dbReference>
<dbReference type="GO" id="GO:0005829">
    <property type="term" value="C:cytosol"/>
    <property type="evidence" value="ECO:0007669"/>
    <property type="project" value="TreeGrafter"/>
</dbReference>
<dbReference type="GO" id="GO:0009011">
    <property type="term" value="F:alpha-1,4-glucan glucosyltransferase (ADP-glucose donor) activity"/>
    <property type="evidence" value="ECO:0007669"/>
    <property type="project" value="UniProtKB-UniRule"/>
</dbReference>
<dbReference type="GO" id="GO:0004373">
    <property type="term" value="F:alpha-1,4-glucan glucosyltransferase (UDP-glucose donor) activity"/>
    <property type="evidence" value="ECO:0007669"/>
    <property type="project" value="InterPro"/>
</dbReference>
<dbReference type="GO" id="GO:0005978">
    <property type="term" value="P:glycogen biosynthetic process"/>
    <property type="evidence" value="ECO:0007669"/>
    <property type="project" value="UniProtKB-UniRule"/>
</dbReference>
<dbReference type="CDD" id="cd03791">
    <property type="entry name" value="GT5_Glycogen_synthase_DULL1-like"/>
    <property type="match status" value="1"/>
</dbReference>
<dbReference type="FunFam" id="3.40.50.2000:FF:000011">
    <property type="entry name" value="Glycogen synthase"/>
    <property type="match status" value="1"/>
</dbReference>
<dbReference type="Gene3D" id="3.40.50.2000">
    <property type="entry name" value="Glycogen Phosphorylase B"/>
    <property type="match status" value="2"/>
</dbReference>
<dbReference type="HAMAP" id="MF_00484">
    <property type="entry name" value="Glycogen_synth"/>
    <property type="match status" value="1"/>
</dbReference>
<dbReference type="InterPro" id="IPR001296">
    <property type="entry name" value="Glyco_trans_1"/>
</dbReference>
<dbReference type="InterPro" id="IPR011835">
    <property type="entry name" value="GS/SS"/>
</dbReference>
<dbReference type="InterPro" id="IPR013534">
    <property type="entry name" value="Starch_synth_cat_dom"/>
</dbReference>
<dbReference type="NCBIfam" id="TIGR02095">
    <property type="entry name" value="glgA"/>
    <property type="match status" value="1"/>
</dbReference>
<dbReference type="NCBIfam" id="NF001899">
    <property type="entry name" value="PRK00654.1-2"/>
    <property type="match status" value="1"/>
</dbReference>
<dbReference type="PANTHER" id="PTHR45825:SF11">
    <property type="entry name" value="ALPHA AMYLASE DOMAIN-CONTAINING PROTEIN"/>
    <property type="match status" value="1"/>
</dbReference>
<dbReference type="PANTHER" id="PTHR45825">
    <property type="entry name" value="GRANULE-BOUND STARCH SYNTHASE 1, CHLOROPLASTIC/AMYLOPLASTIC"/>
    <property type="match status" value="1"/>
</dbReference>
<dbReference type="Pfam" id="PF08323">
    <property type="entry name" value="Glyco_transf_5"/>
    <property type="match status" value="1"/>
</dbReference>
<dbReference type="Pfam" id="PF00534">
    <property type="entry name" value="Glycos_transf_1"/>
    <property type="match status" value="1"/>
</dbReference>
<dbReference type="SUPFAM" id="SSF53756">
    <property type="entry name" value="UDP-Glycosyltransferase/glycogen phosphorylase"/>
    <property type="match status" value="1"/>
</dbReference>
<gene>
    <name evidence="1" type="primary">glgA</name>
    <name type="ordered locus">APL_0349</name>
</gene>
<name>GLGA_ACTP2</name>
<keyword id="KW-0320">Glycogen biosynthesis</keyword>
<keyword id="KW-0328">Glycosyltransferase</keyword>
<keyword id="KW-1185">Reference proteome</keyword>
<keyword id="KW-0808">Transferase</keyword>